<dbReference type="EMBL" id="CM000310">
    <property type="protein sequence ID" value="EEQ44212.1"/>
    <property type="molecule type" value="Genomic_DNA"/>
</dbReference>
<dbReference type="SMR" id="C4YPS3"/>
<dbReference type="PaxDb" id="5476-C4YPS3"/>
<dbReference type="VEuPathDB" id="FungiDB:CAWG_02475"/>
<dbReference type="HOGENOM" id="CLU_095038_0_0_1"/>
<dbReference type="OMA" id="LNNTKQV"/>
<dbReference type="OrthoDB" id="26684at766764"/>
<dbReference type="Proteomes" id="UP000001429">
    <property type="component" value="Chromosome 3"/>
</dbReference>
<dbReference type="GO" id="GO:0005730">
    <property type="term" value="C:nucleolus"/>
    <property type="evidence" value="ECO:0007669"/>
    <property type="project" value="UniProtKB-SubCell"/>
</dbReference>
<dbReference type="InterPro" id="IPR031404">
    <property type="entry name" value="Rrt14"/>
</dbReference>
<dbReference type="Pfam" id="PF17075">
    <property type="entry name" value="RRT14"/>
    <property type="match status" value="1"/>
</dbReference>
<keyword id="KW-0539">Nucleus</keyword>
<keyword id="KW-0804">Transcription</keyword>
<keyword id="KW-0805">Transcription regulation</keyword>
<accession>C4YPS3</accession>
<reference key="1">
    <citation type="journal article" date="2009" name="Nature">
        <title>Evolution of pathogenicity and sexual reproduction in eight Candida genomes.</title>
        <authorList>
            <person name="Butler G."/>
            <person name="Rasmussen M.D."/>
            <person name="Lin M.F."/>
            <person name="Santos M.A.S."/>
            <person name="Sakthikumar S."/>
            <person name="Munro C.A."/>
            <person name="Rheinbay E."/>
            <person name="Grabherr M."/>
            <person name="Forche A."/>
            <person name="Reedy J.L."/>
            <person name="Agrafioti I."/>
            <person name="Arnaud M.B."/>
            <person name="Bates S."/>
            <person name="Brown A.J.P."/>
            <person name="Brunke S."/>
            <person name="Costanzo M.C."/>
            <person name="Fitzpatrick D.A."/>
            <person name="de Groot P.W.J."/>
            <person name="Harris D."/>
            <person name="Hoyer L.L."/>
            <person name="Hube B."/>
            <person name="Klis F.M."/>
            <person name="Kodira C."/>
            <person name="Lennard N."/>
            <person name="Logue M.E."/>
            <person name="Martin R."/>
            <person name="Neiman A.M."/>
            <person name="Nikolaou E."/>
            <person name="Quail M.A."/>
            <person name="Quinn J."/>
            <person name="Santos M.C."/>
            <person name="Schmitzberger F.F."/>
            <person name="Sherlock G."/>
            <person name="Shah P."/>
            <person name="Silverstein K.A.T."/>
            <person name="Skrzypek M.S."/>
            <person name="Soll D."/>
            <person name="Staggs R."/>
            <person name="Stansfield I."/>
            <person name="Stumpf M.P.H."/>
            <person name="Sudbery P.E."/>
            <person name="Srikantha T."/>
            <person name="Zeng Q."/>
            <person name="Berman J."/>
            <person name="Berriman M."/>
            <person name="Heitman J."/>
            <person name="Gow N.A.R."/>
            <person name="Lorenz M.C."/>
            <person name="Birren B.W."/>
            <person name="Kellis M."/>
            <person name="Cuomo C.A."/>
        </authorList>
    </citation>
    <scope>NUCLEOTIDE SEQUENCE [LARGE SCALE GENOMIC DNA]</scope>
    <source>
        <strain>WO-1</strain>
    </source>
</reference>
<protein>
    <recommendedName>
        <fullName>Regulator of rDNA transcription 14</fullName>
    </recommendedName>
</protein>
<sequence>MSFNSNASKYQAENTVDKLFSNILHTSTTSKSVSKSKSKSKSKPKPISSTQLLVNQLQSTNTTANNNNTKRKKHNNNKRINKTLLEEKKFSKFIKYNHIKQKSNKSELDEKYLNKLVRKNINSLNKINKIDDLLIDEELNQIKQELLEENEFVGMGGGQLKGGKRLRKKLLNNTKQVIDEFDGFGEISSSNNNNKKKNSSHPGLTPGLAPVDYEEEDDE</sequence>
<name>RRT14_CANAW</name>
<proteinExistence type="inferred from homology"/>
<organism>
    <name type="scientific">Candida albicans (strain WO-1)</name>
    <name type="common">Yeast</name>
    <dbReference type="NCBI Taxonomy" id="294748"/>
    <lineage>
        <taxon>Eukaryota</taxon>
        <taxon>Fungi</taxon>
        <taxon>Dikarya</taxon>
        <taxon>Ascomycota</taxon>
        <taxon>Saccharomycotina</taxon>
        <taxon>Pichiomycetes</taxon>
        <taxon>Debaryomycetaceae</taxon>
        <taxon>Candida/Lodderomyces clade</taxon>
        <taxon>Candida</taxon>
    </lineage>
</organism>
<evidence type="ECO:0000250" key="1"/>
<evidence type="ECO:0000256" key="2">
    <source>
        <dbReference type="SAM" id="MobiDB-lite"/>
    </source>
</evidence>
<evidence type="ECO:0000305" key="3"/>
<comment type="function">
    <text evidence="1">Involved in ribosome biogenesis, probably through modulation of rDNA transcription.</text>
</comment>
<comment type="subcellular location">
    <subcellularLocation>
        <location evidence="1">Nucleus</location>
        <location evidence="1">Nucleolus</location>
    </subcellularLocation>
</comment>
<comment type="similarity">
    <text evidence="3">Belongs to the RRT14 family.</text>
</comment>
<feature type="chain" id="PRO_0000404335" description="Regulator of rDNA transcription 14">
    <location>
        <begin position="1"/>
        <end position="219"/>
    </location>
</feature>
<feature type="region of interest" description="Disordered" evidence="2">
    <location>
        <begin position="27"/>
        <end position="51"/>
    </location>
</feature>
<feature type="region of interest" description="Disordered" evidence="2">
    <location>
        <begin position="60"/>
        <end position="79"/>
    </location>
</feature>
<feature type="region of interest" description="Disordered" evidence="2">
    <location>
        <begin position="184"/>
        <end position="219"/>
    </location>
</feature>
<feature type="compositionally biased region" description="Basic residues" evidence="2">
    <location>
        <begin position="34"/>
        <end position="44"/>
    </location>
</feature>
<feature type="compositionally biased region" description="Basic residues" evidence="2">
    <location>
        <begin position="69"/>
        <end position="79"/>
    </location>
</feature>
<gene>
    <name type="primary">RRT14</name>
    <name type="ORF">CAWG_02475</name>
</gene>